<comment type="function">
    <text evidence="2">Functions as a transcriptional regulator.</text>
</comment>
<comment type="subunit">
    <text evidence="2">Interacts (via N-terminal 120 amino acid region) with ETV5 (via C-terminal).</text>
</comment>
<comment type="interaction">
    <interactant intactId="EBI-7228860">
        <id>Q9UJ78</id>
    </interactant>
    <interactant intactId="EBI-80140">
        <id>P63165</id>
        <label>SUMO1</label>
    </interactant>
    <organismsDiffer>false</organismsDiffer>
    <experiments>3</experiments>
</comment>
<comment type="interaction">
    <interactant intactId="EBI-17634549">
        <id>Q9UJ78-2</id>
    </interactant>
    <interactant intactId="EBI-11523526">
        <id>Q13554-3</id>
        <label>CAMK2B</label>
    </interactant>
    <organismsDiffer>false</organismsDiffer>
    <experiments>3</experiments>
</comment>
<comment type="interaction">
    <interactant intactId="EBI-17634549">
        <id>Q9UJ78-2</id>
    </interactant>
    <interactant intactId="EBI-11530605">
        <id>Q9H257-2</id>
        <label>CARD9</label>
    </interactant>
    <organismsDiffer>false</organismsDiffer>
    <experiments>3</experiments>
</comment>
<comment type="interaction">
    <interactant intactId="EBI-17634549">
        <id>Q9UJ78-2</id>
    </interactant>
    <interactant intactId="EBI-740135">
        <id>P35520</id>
        <label>CBS</label>
    </interactant>
    <organismsDiffer>false</organismsDiffer>
    <experiments>3</experiments>
</comment>
<comment type="interaction">
    <interactant intactId="EBI-17634549">
        <id>Q9UJ78-2</id>
    </interactant>
    <interactant intactId="EBI-1055572">
        <id>P17661</id>
        <label>DES</label>
    </interactant>
    <organismsDiffer>false</organismsDiffer>
    <experiments>3</experiments>
</comment>
<comment type="interaction">
    <interactant intactId="EBI-17634549">
        <id>Q9UJ78-2</id>
    </interactant>
    <interactant intactId="EBI-494804">
        <id>Q13158</id>
        <label>FADD</label>
    </interactant>
    <organismsDiffer>false</organismsDiffer>
    <experiments>3</experiments>
</comment>
<comment type="interaction">
    <interactant intactId="EBI-17634549">
        <id>Q9UJ78-2</id>
    </interactant>
    <interactant intactId="EBI-2549423">
        <id>Q6NT76</id>
        <label>HMBOX1</label>
    </interactant>
    <organismsDiffer>false</organismsDiffer>
    <experiments>3</experiments>
</comment>
<comment type="interaction">
    <interactant intactId="EBI-17634549">
        <id>Q9UJ78-2</id>
    </interactant>
    <interactant intactId="EBI-746815">
        <id>Q86YM7</id>
        <label>HOMER1</label>
    </interactant>
    <organismsDiffer>false</organismsDiffer>
    <experiments>3</experiments>
</comment>
<comment type="interaction">
    <interactant intactId="EBI-17634549">
        <id>Q9UJ78-2</id>
    </interactant>
    <interactant intactId="EBI-11974495">
        <id>Q5TA77</id>
        <label>LCE3B</label>
    </interactant>
    <organismsDiffer>false</organismsDiffer>
    <experiments>3</experiments>
</comment>
<comment type="interaction">
    <interactant intactId="EBI-17634549">
        <id>Q9UJ78-2</id>
    </interactant>
    <interactant intactId="EBI-296331">
        <id>Q02548</id>
        <label>PAX5</label>
    </interactant>
    <organismsDiffer>false</organismsDiffer>
    <experiments>3</experiments>
</comment>
<comment type="interaction">
    <interactant intactId="EBI-17634549">
        <id>Q9UJ78-2</id>
    </interactant>
    <interactant intactId="EBI-357061">
        <id>Q92734</id>
        <label>TFG</label>
    </interactant>
    <organismsDiffer>false</organismsDiffer>
    <experiments>3</experiments>
</comment>
<comment type="interaction">
    <interactant intactId="EBI-17634549">
        <id>Q9UJ78-2</id>
    </interactant>
    <interactant intactId="EBI-355744">
        <id>Q12933</id>
        <label>TRAF2</label>
    </interactant>
    <organismsDiffer>false</organismsDiffer>
    <experiments>3</experiments>
</comment>
<comment type="interaction">
    <interactant intactId="EBI-17634549">
        <id>Q9UJ78-2</id>
    </interactant>
    <interactant intactId="EBI-3650647">
        <id>Q9BUZ4</id>
        <label>TRAF4</label>
    </interactant>
    <organismsDiffer>false</organismsDiffer>
    <experiments>3</experiments>
</comment>
<comment type="interaction">
    <interactant intactId="EBI-17634549">
        <id>Q9UJ78-2</id>
    </interactant>
    <interactant intactId="EBI-358993">
        <id>Q15645</id>
        <label>TRIP13</label>
    </interactant>
    <organismsDiffer>false</organismsDiffer>
    <experiments>3</experiments>
</comment>
<comment type="interaction">
    <interactant intactId="EBI-17634549">
        <id>Q9UJ78-2</id>
    </interactant>
    <interactant intactId="EBI-741480">
        <id>Q9UMX0</id>
        <label>UBQLN1</label>
    </interactant>
    <organismsDiffer>false</organismsDiffer>
    <experiments>3</experiments>
</comment>
<comment type="interaction">
    <interactant intactId="EBI-17634549">
        <id>Q9UJ78-2</id>
    </interactant>
    <interactant intactId="EBI-3918996">
        <id>Q9HCK0</id>
        <label>ZBTB26</label>
    </interactant>
    <organismsDiffer>false</organismsDiffer>
    <experiments>3</experiments>
</comment>
<comment type="interaction">
    <interactant intactId="EBI-17634549">
        <id>Q9UJ78-2</id>
    </interactant>
    <interactant intactId="EBI-741415">
        <id>O60232</id>
        <label>ZNRD2</label>
    </interactant>
    <organismsDiffer>false</organismsDiffer>
    <experiments>3</experiments>
</comment>
<comment type="subcellular location">
    <subcellularLocation>
        <location evidence="8">Nucleus</location>
    </subcellularLocation>
</comment>
<comment type="alternative products">
    <event type="alternative splicing"/>
    <isoform>
        <id>Q9UJ78-4</id>
        <name>4</name>
        <sequence type="displayed"/>
    </isoform>
    <isoform>
        <id>Q9UJ78-1</id>
        <name>1</name>
        <sequence type="described" ref="VSP_034646 VSP_034647"/>
    </isoform>
    <isoform>
        <id>Q9UJ78-2</id>
        <name>2</name>
        <sequence type="described" ref="VSP_011443 VSP_011444"/>
    </isoform>
    <isoform>
        <id>Q9UJ78-3</id>
        <name>3</name>
        <sequence type="described" ref="VSP_011442 VSP_011445"/>
    </isoform>
    <isoform>
        <id>Q9UJ78-5</id>
        <name>5</name>
        <sequence type="described" ref="VSP_034645"/>
    </isoform>
</comment>
<comment type="sequence caution" evidence="8">
    <conflict type="frameshift">
        <sequence resource="EMBL-CDS" id="AAF29022"/>
    </conflict>
</comment>
<reference key="1">
    <citation type="journal article" date="2000" name="Cytogenet. Cell Genet.">
        <title>Cloning of ZNF237, a novel member of the MYM gene family that maps to human chromosome 13q11--&gt;q12.</title>
        <authorList>
            <person name="Sohal J."/>
            <person name="Reiter A."/>
            <person name="Goldman J.M."/>
            <person name="Cross N.C."/>
        </authorList>
    </citation>
    <scope>NUCLEOTIDE SEQUENCE [MRNA] (ISOFORMS 1; 2 AND 3)</scope>
</reference>
<reference key="2">
    <citation type="submission" date="2003-05" db="EMBL/GenBank/DDBJ databases">
        <title>Cloning of human full-length CDSs in BD Creator(TM) system donor vector.</title>
        <authorList>
            <person name="Kalnine N."/>
            <person name="Chen X."/>
            <person name="Rolfs A."/>
            <person name="Halleck A."/>
            <person name="Hines L."/>
            <person name="Eisenstein S."/>
            <person name="Koundinya M."/>
            <person name="Raphael J."/>
            <person name="Moreira D."/>
            <person name="Kelley T."/>
            <person name="LaBaer J."/>
            <person name="Lin Y."/>
            <person name="Phelan M."/>
            <person name="Farmer A."/>
        </authorList>
    </citation>
    <scope>NUCLEOTIDE SEQUENCE [LARGE SCALE MRNA] (ISOFORM 2)</scope>
    <scope>VARIANTS VAL-125 AND PHE-137</scope>
</reference>
<reference key="3">
    <citation type="journal article" date="2004" name="Nat. Genet.">
        <title>Complete sequencing and characterization of 21,243 full-length human cDNAs.</title>
        <authorList>
            <person name="Ota T."/>
            <person name="Suzuki Y."/>
            <person name="Nishikawa T."/>
            <person name="Otsuki T."/>
            <person name="Sugiyama T."/>
            <person name="Irie R."/>
            <person name="Wakamatsu A."/>
            <person name="Hayashi K."/>
            <person name="Sato H."/>
            <person name="Nagai K."/>
            <person name="Kimura K."/>
            <person name="Makita H."/>
            <person name="Sekine M."/>
            <person name="Obayashi M."/>
            <person name="Nishi T."/>
            <person name="Shibahara T."/>
            <person name="Tanaka T."/>
            <person name="Ishii S."/>
            <person name="Yamamoto J."/>
            <person name="Saito K."/>
            <person name="Kawai Y."/>
            <person name="Isono Y."/>
            <person name="Nakamura Y."/>
            <person name="Nagahari K."/>
            <person name="Murakami K."/>
            <person name="Yasuda T."/>
            <person name="Iwayanagi T."/>
            <person name="Wagatsuma M."/>
            <person name="Shiratori A."/>
            <person name="Sudo H."/>
            <person name="Hosoiri T."/>
            <person name="Kaku Y."/>
            <person name="Kodaira H."/>
            <person name="Kondo H."/>
            <person name="Sugawara M."/>
            <person name="Takahashi M."/>
            <person name="Kanda K."/>
            <person name="Yokoi T."/>
            <person name="Furuya T."/>
            <person name="Kikkawa E."/>
            <person name="Omura Y."/>
            <person name="Abe K."/>
            <person name="Kamihara K."/>
            <person name="Katsuta N."/>
            <person name="Sato K."/>
            <person name="Tanikawa M."/>
            <person name="Yamazaki M."/>
            <person name="Ninomiya K."/>
            <person name="Ishibashi T."/>
            <person name="Yamashita H."/>
            <person name="Murakawa K."/>
            <person name="Fujimori K."/>
            <person name="Tanai H."/>
            <person name="Kimata M."/>
            <person name="Watanabe M."/>
            <person name="Hiraoka S."/>
            <person name="Chiba Y."/>
            <person name="Ishida S."/>
            <person name="Ono Y."/>
            <person name="Takiguchi S."/>
            <person name="Watanabe S."/>
            <person name="Yosida M."/>
            <person name="Hotuta T."/>
            <person name="Kusano J."/>
            <person name="Kanehori K."/>
            <person name="Takahashi-Fujii A."/>
            <person name="Hara H."/>
            <person name="Tanase T.-O."/>
            <person name="Nomura Y."/>
            <person name="Togiya S."/>
            <person name="Komai F."/>
            <person name="Hara R."/>
            <person name="Takeuchi K."/>
            <person name="Arita M."/>
            <person name="Imose N."/>
            <person name="Musashino K."/>
            <person name="Yuuki H."/>
            <person name="Oshima A."/>
            <person name="Sasaki N."/>
            <person name="Aotsuka S."/>
            <person name="Yoshikawa Y."/>
            <person name="Matsunawa H."/>
            <person name="Ichihara T."/>
            <person name="Shiohata N."/>
            <person name="Sano S."/>
            <person name="Moriya S."/>
            <person name="Momiyama H."/>
            <person name="Satoh N."/>
            <person name="Takami S."/>
            <person name="Terashima Y."/>
            <person name="Suzuki O."/>
            <person name="Nakagawa S."/>
            <person name="Senoh A."/>
            <person name="Mizoguchi H."/>
            <person name="Goto Y."/>
            <person name="Shimizu F."/>
            <person name="Wakebe H."/>
            <person name="Hishigaki H."/>
            <person name="Watanabe T."/>
            <person name="Sugiyama A."/>
            <person name="Takemoto M."/>
            <person name="Kawakami B."/>
            <person name="Yamazaki M."/>
            <person name="Watanabe K."/>
            <person name="Kumagai A."/>
            <person name="Itakura S."/>
            <person name="Fukuzumi Y."/>
            <person name="Fujimori Y."/>
            <person name="Komiyama M."/>
            <person name="Tashiro H."/>
            <person name="Tanigami A."/>
            <person name="Fujiwara T."/>
            <person name="Ono T."/>
            <person name="Yamada K."/>
            <person name="Fujii Y."/>
            <person name="Ozaki K."/>
            <person name="Hirao M."/>
            <person name="Ohmori Y."/>
            <person name="Kawabata A."/>
            <person name="Hikiji T."/>
            <person name="Kobatake N."/>
            <person name="Inagaki H."/>
            <person name="Ikema Y."/>
            <person name="Okamoto S."/>
            <person name="Okitani R."/>
            <person name="Kawakami T."/>
            <person name="Noguchi S."/>
            <person name="Itoh T."/>
            <person name="Shigeta K."/>
            <person name="Senba T."/>
            <person name="Matsumura K."/>
            <person name="Nakajima Y."/>
            <person name="Mizuno T."/>
            <person name="Morinaga M."/>
            <person name="Sasaki M."/>
            <person name="Togashi T."/>
            <person name="Oyama M."/>
            <person name="Hata H."/>
            <person name="Watanabe M."/>
            <person name="Komatsu T."/>
            <person name="Mizushima-Sugano J."/>
            <person name="Satoh T."/>
            <person name="Shirai Y."/>
            <person name="Takahashi Y."/>
            <person name="Nakagawa K."/>
            <person name="Okumura K."/>
            <person name="Nagase T."/>
            <person name="Nomura N."/>
            <person name="Kikuchi H."/>
            <person name="Masuho Y."/>
            <person name="Yamashita R."/>
            <person name="Nakai K."/>
            <person name="Yada T."/>
            <person name="Nakamura Y."/>
            <person name="Ohara O."/>
            <person name="Isogai T."/>
            <person name="Sugano S."/>
        </authorList>
    </citation>
    <scope>NUCLEOTIDE SEQUENCE [LARGE SCALE MRNA] (ISOFORM 3)</scope>
    <source>
        <tissue>Brain</tissue>
    </source>
</reference>
<reference key="4">
    <citation type="journal article" date="2004" name="Nature">
        <title>The DNA sequence and analysis of human chromosome 13.</title>
        <authorList>
            <person name="Dunham A."/>
            <person name="Matthews L.H."/>
            <person name="Burton J."/>
            <person name="Ashurst J.L."/>
            <person name="Howe K.L."/>
            <person name="Ashcroft K.J."/>
            <person name="Beare D.M."/>
            <person name="Burford D.C."/>
            <person name="Hunt S.E."/>
            <person name="Griffiths-Jones S."/>
            <person name="Jones M.C."/>
            <person name="Keenan S.J."/>
            <person name="Oliver K."/>
            <person name="Scott C.E."/>
            <person name="Ainscough R."/>
            <person name="Almeida J.P."/>
            <person name="Ambrose K.D."/>
            <person name="Andrews D.T."/>
            <person name="Ashwell R.I.S."/>
            <person name="Babbage A.K."/>
            <person name="Bagguley C.L."/>
            <person name="Bailey J."/>
            <person name="Bannerjee R."/>
            <person name="Barlow K.F."/>
            <person name="Bates K."/>
            <person name="Beasley H."/>
            <person name="Bird C.P."/>
            <person name="Bray-Allen S."/>
            <person name="Brown A.J."/>
            <person name="Brown J.Y."/>
            <person name="Burrill W."/>
            <person name="Carder C."/>
            <person name="Carter N.P."/>
            <person name="Chapman J.C."/>
            <person name="Clamp M.E."/>
            <person name="Clark S.Y."/>
            <person name="Clarke G."/>
            <person name="Clee C.M."/>
            <person name="Clegg S.C."/>
            <person name="Cobley V."/>
            <person name="Collins J.E."/>
            <person name="Corby N."/>
            <person name="Coville G.J."/>
            <person name="Deloukas P."/>
            <person name="Dhami P."/>
            <person name="Dunham I."/>
            <person name="Dunn M."/>
            <person name="Earthrowl M.E."/>
            <person name="Ellington A.G."/>
            <person name="Faulkner L."/>
            <person name="Frankish A.G."/>
            <person name="Frankland J."/>
            <person name="French L."/>
            <person name="Garner P."/>
            <person name="Garnett J."/>
            <person name="Gilbert J.G.R."/>
            <person name="Gilson C.J."/>
            <person name="Ghori J."/>
            <person name="Grafham D.V."/>
            <person name="Gribble S.M."/>
            <person name="Griffiths C."/>
            <person name="Hall R.E."/>
            <person name="Hammond S."/>
            <person name="Harley J.L."/>
            <person name="Hart E.A."/>
            <person name="Heath P.D."/>
            <person name="Howden P.J."/>
            <person name="Huckle E.J."/>
            <person name="Hunt P.J."/>
            <person name="Hunt A.R."/>
            <person name="Johnson C."/>
            <person name="Johnson D."/>
            <person name="Kay M."/>
            <person name="Kimberley A.M."/>
            <person name="King A."/>
            <person name="Laird G.K."/>
            <person name="Langford C.J."/>
            <person name="Lawlor S."/>
            <person name="Leongamornlert D.A."/>
            <person name="Lloyd D.M."/>
            <person name="Lloyd C."/>
            <person name="Loveland J.E."/>
            <person name="Lovell J."/>
            <person name="Martin S."/>
            <person name="Mashreghi-Mohammadi M."/>
            <person name="McLaren S.J."/>
            <person name="McMurray A."/>
            <person name="Milne S."/>
            <person name="Moore M.J.F."/>
            <person name="Nickerson T."/>
            <person name="Palmer S.A."/>
            <person name="Pearce A.V."/>
            <person name="Peck A.I."/>
            <person name="Pelan S."/>
            <person name="Phillimore B."/>
            <person name="Porter K.M."/>
            <person name="Rice C.M."/>
            <person name="Searle S."/>
            <person name="Sehra H.K."/>
            <person name="Shownkeen R."/>
            <person name="Skuce C.D."/>
            <person name="Smith M."/>
            <person name="Steward C.A."/>
            <person name="Sycamore N."/>
            <person name="Tester J."/>
            <person name="Thomas D.W."/>
            <person name="Tracey A."/>
            <person name="Tromans A."/>
            <person name="Tubby B."/>
            <person name="Wall M."/>
            <person name="Wallis J.M."/>
            <person name="West A.P."/>
            <person name="Whitehead S.L."/>
            <person name="Willey D.L."/>
            <person name="Wilming L."/>
            <person name="Wray P.W."/>
            <person name="Wright M.W."/>
            <person name="Young L."/>
            <person name="Coulson A."/>
            <person name="Durbin R.M."/>
            <person name="Hubbard T."/>
            <person name="Sulston J.E."/>
            <person name="Beck S."/>
            <person name="Bentley D.R."/>
            <person name="Rogers J."/>
            <person name="Ross M.T."/>
        </authorList>
    </citation>
    <scope>NUCLEOTIDE SEQUENCE [LARGE SCALE GENOMIC DNA]</scope>
</reference>
<reference key="5">
    <citation type="submission" date="2005-07" db="EMBL/GenBank/DDBJ databases">
        <authorList>
            <person name="Mural R.J."/>
            <person name="Istrail S."/>
            <person name="Sutton G.G."/>
            <person name="Florea L."/>
            <person name="Halpern A.L."/>
            <person name="Mobarry C.M."/>
            <person name="Lippert R."/>
            <person name="Walenz B."/>
            <person name="Shatkay H."/>
            <person name="Dew I."/>
            <person name="Miller J.R."/>
            <person name="Flanigan M.J."/>
            <person name="Edwards N.J."/>
            <person name="Bolanos R."/>
            <person name="Fasulo D."/>
            <person name="Halldorsson B.V."/>
            <person name="Hannenhalli S."/>
            <person name="Turner R."/>
            <person name="Yooseph S."/>
            <person name="Lu F."/>
            <person name="Nusskern D.R."/>
            <person name="Shue B.C."/>
            <person name="Zheng X.H."/>
            <person name="Zhong F."/>
            <person name="Delcher A.L."/>
            <person name="Huson D.H."/>
            <person name="Kravitz S.A."/>
            <person name="Mouchard L."/>
            <person name="Reinert K."/>
            <person name="Remington K.A."/>
            <person name="Clark A.G."/>
            <person name="Waterman M.S."/>
            <person name="Eichler E.E."/>
            <person name="Adams M.D."/>
            <person name="Hunkapiller M.W."/>
            <person name="Myers E.W."/>
            <person name="Venter J.C."/>
        </authorList>
    </citation>
    <scope>NUCLEOTIDE SEQUENCE [LARGE SCALE GENOMIC DNA]</scope>
</reference>
<reference key="6">
    <citation type="journal article" date="2004" name="Genome Res.">
        <title>The status, quality, and expansion of the NIH full-length cDNA project: the Mammalian Gene Collection (MGC).</title>
        <authorList>
            <consortium name="The MGC Project Team"/>
        </authorList>
    </citation>
    <scope>NUCLEOTIDE SEQUENCE [LARGE SCALE MRNA] (ISOFORM 2)</scope>
    <scope>VARIANTS VAL-125 AND PHE-137</scope>
    <source>
        <tissue>Urinary bladder</tissue>
    </source>
</reference>
<reference key="7">
    <citation type="journal article" date="2000" name="Genome Res.">
        <title>Cloning and functional analysis of cDNAs with open reading frames for 300 previously undefined genes expressed in CD34+ hematopoietic stem/progenitor cells.</title>
        <authorList>
            <person name="Zhang Q.-H."/>
            <person name="Ye M."/>
            <person name="Wu X.-Y."/>
            <person name="Ren S.-X."/>
            <person name="Zhao M."/>
            <person name="Zhao C.-J."/>
            <person name="Fu G."/>
            <person name="Shen Y."/>
            <person name="Fan H.-Y."/>
            <person name="Lu G."/>
            <person name="Zhong M."/>
            <person name="Xu X.-R."/>
            <person name="Han Z.-G."/>
            <person name="Zhang J.-W."/>
            <person name="Tao J."/>
            <person name="Huang Q.-H."/>
            <person name="Zhou J."/>
            <person name="Hu G.-X."/>
            <person name="Gu J."/>
            <person name="Chen S.-J."/>
            <person name="Chen Z."/>
        </authorList>
    </citation>
    <scope>NUCLEOTIDE SEQUENCE [LARGE SCALE MRNA] OF 165-346</scope>
    <source>
        <tissue>Umbilical cord blood</tissue>
    </source>
</reference>
<reference key="8">
    <citation type="journal article" date="2009" name="Sci. Signal.">
        <title>Quantitative phosphoproteomic analysis of T cell receptor signaling reveals system-wide modulation of protein-protein interactions.</title>
        <authorList>
            <person name="Mayya V."/>
            <person name="Lundgren D.H."/>
            <person name="Hwang S.-I."/>
            <person name="Rezaul K."/>
            <person name="Wu L."/>
            <person name="Eng J.K."/>
            <person name="Rodionov V."/>
            <person name="Han D.K."/>
        </authorList>
    </citation>
    <scope>IDENTIFICATION BY MASS SPECTROMETRY [LARGE SCALE ANALYSIS]</scope>
    <source>
        <tissue>Leukemic T-cell</tissue>
    </source>
</reference>
<reference key="9">
    <citation type="journal article" date="2014" name="Nat. Struct. Mol. Biol.">
        <title>Uncovering global SUMOylation signaling networks in a site-specific manner.</title>
        <authorList>
            <person name="Hendriks I.A."/>
            <person name="D'Souza R.C."/>
            <person name="Yang B."/>
            <person name="Verlaan-de Vries M."/>
            <person name="Mann M."/>
            <person name="Vertegaal A.C."/>
        </authorList>
    </citation>
    <scope>SUMOYLATION [LARGE SCALE ANALYSIS] AT LYS-455</scope>
    <scope>IDENTIFICATION BY MASS SPECTROMETRY [LARGE SCALE ANALYSIS]</scope>
</reference>
<reference key="10">
    <citation type="journal article" date="2017" name="Nat. Struct. Mol. Biol.">
        <title>Site-specific mapping of the human SUMO proteome reveals co-modification with phosphorylation.</title>
        <authorList>
            <person name="Hendriks I.A."/>
            <person name="Lyon D."/>
            <person name="Young C."/>
            <person name="Jensen L.J."/>
            <person name="Vertegaal A.C."/>
            <person name="Nielsen M.L."/>
        </authorList>
    </citation>
    <scope>SUMOYLATION [LARGE SCALE ANALYSIS] AT LYS-88; LYS-91; LYS-134; LYS-149; LYS-166; LYS-225; LYS-443; LYS-455; LYS-462 AND LYS-552</scope>
    <scope>IDENTIFICATION BY MASS SPECTROMETRY [LARGE SCALE ANALYSIS]</scope>
</reference>
<reference key="11">
    <citation type="submission" date="2006-06" db="PDB data bank">
        <title>Solution structure of TRASH domain of zinc finger MYM-type protein 5.</title>
        <authorList>
            <consortium name="RIKEN structural genomics initiative (RSGI)"/>
        </authorList>
    </citation>
    <scope>STRUCTURE BY NMR OF 229-277</scope>
</reference>
<reference key="12">
    <citation type="journal article" date="2007" name="Brain Res.">
        <title>Analysis of transcriptional modulation of the presenilin 1 gene promoter by ZNF237, a candidate binding partner of the Ets transcription factor ERM.</title>
        <authorList>
            <person name="Pastorcic M."/>
            <person name="Das H.K."/>
        </authorList>
    </citation>
    <scope>INTERACTION WITH ETV5</scope>
    <scope>FUNCTION</scope>
    <scope>MUTAGENESIS OF ASN-112; SER-114; THR-116 AND ASP-120</scope>
</reference>
<keyword id="KW-0002">3D-structure</keyword>
<keyword id="KW-0025">Alternative splicing</keyword>
<keyword id="KW-1017">Isopeptide bond</keyword>
<keyword id="KW-0479">Metal-binding</keyword>
<keyword id="KW-0539">Nucleus</keyword>
<keyword id="KW-1267">Proteomics identification</keyword>
<keyword id="KW-1185">Reference proteome</keyword>
<keyword id="KW-0677">Repeat</keyword>
<keyword id="KW-0804">Transcription</keyword>
<keyword id="KW-0805">Transcription regulation</keyword>
<keyword id="KW-0832">Ubl conjugation</keyword>
<keyword id="KW-0862">Zinc</keyword>
<keyword id="KW-0863">Zinc-finger</keyword>
<sequence length="669" mass="74817">MEKCSVGGLELTEQTPALLGNMAMATSLMDIGDSFGHPACPLVSRSRNSPVEDDDDDDDVVFIESIQPPSISAPAIADQRNFIFASSKNEKPQGNYSVIPPSSRDLASQKGNISETIVIDDEEDIETNGGAEKKSSCFIEWGLPGTKNKTNDLDFSTSSLSRSKTKTGVRPFNPGRMNVAGDLFQNGEFATHHSPDSWISQSASFPSNQKQPGVDSLSPVALLRKQNFQPTAQQQLTKPAKITCANCKKPLQKGQTAYQRKGSAHLFCSTTCLSSFSHKRTQNTRSIICKKDASTKKANVILPVESSKSFQEFYSTSCLSPCENNWNLKKGVFNKSRCTICSKLAEIRHEVSVNNVTHKLCSNHCFNKYRLANGLIMNCCEHCGEYMPSKSTGNNILVIGGQQKRFCCQSCINEYKQMMETKSKKLTASENRKRNAFREENEKQLYGSSNTLLKKIEGIPEKKEKTSQLQLSVECGTDTLLIQENVNLPPSSTSTIADTFQEQLEEKNFEDSIVPVVLSADPGTWPRILNIKQRDTLVENVPPQVRNFNFPKDNTGRKFSETYYTRILPNGEKTTRSWLLYSTSKDSVFCLYCKLFGEGKNQLKNENGCKDWQHLSHILSKHEESEMHVNNSVKYSKLKSDLKKNKAIDAAEHRLYENEKNDGVLLLYT</sequence>
<gene>
    <name type="primary">ZMYM5</name>
    <name type="synonym">ZNF198L1</name>
    <name type="synonym">ZNF237</name>
    <name type="ORF">HSPC050</name>
</gene>
<organism>
    <name type="scientific">Homo sapiens</name>
    <name type="common">Human</name>
    <dbReference type="NCBI Taxonomy" id="9606"/>
    <lineage>
        <taxon>Eukaryota</taxon>
        <taxon>Metazoa</taxon>
        <taxon>Chordata</taxon>
        <taxon>Craniata</taxon>
        <taxon>Vertebrata</taxon>
        <taxon>Euteleostomi</taxon>
        <taxon>Mammalia</taxon>
        <taxon>Eutheria</taxon>
        <taxon>Euarchontoglires</taxon>
        <taxon>Primates</taxon>
        <taxon>Haplorrhini</taxon>
        <taxon>Catarrhini</taxon>
        <taxon>Hominidae</taxon>
        <taxon>Homo</taxon>
    </lineage>
</organism>
<protein>
    <recommendedName>
        <fullName>Zinc finger MYM-type protein 5</fullName>
    </recommendedName>
    <alternativeName>
        <fullName>Zinc finger protein 198-like 1</fullName>
    </alternativeName>
    <alternativeName>
        <fullName>Zinc finger protein 237</fullName>
    </alternativeName>
</protein>
<name>ZMYM5_HUMAN</name>
<feature type="chain" id="PRO_0000191380" description="Zinc finger MYM-type protein 5">
    <location>
        <begin position="1"/>
        <end position="669"/>
    </location>
</feature>
<feature type="zinc finger region" description="MYM-type 1">
    <location>
        <begin position="265"/>
        <end position="299"/>
    </location>
</feature>
<feature type="zinc finger region" description="MYM-type 2">
    <location>
        <begin position="311"/>
        <end position="351"/>
    </location>
</feature>
<feature type="zinc finger region" description="MYM-type 3">
    <location>
        <begin position="358"/>
        <end position="393"/>
    </location>
</feature>
<feature type="zinc finger region" description="MYM-type 4">
    <location>
        <begin position="404"/>
        <end position="431"/>
    </location>
</feature>
<feature type="cross-link" description="Glycyl lysine isopeptide (Lys-Gly) (interchain with G-Cter in SUMO2)" evidence="10">
    <location>
        <position position="88"/>
    </location>
</feature>
<feature type="cross-link" description="Glycyl lysine isopeptide (Lys-Gly) (interchain with G-Cter in SUMO2)" evidence="10">
    <location>
        <position position="91"/>
    </location>
</feature>
<feature type="cross-link" description="Glycyl lysine isopeptide (Lys-Gly) (interchain with G-Cter in SUMO2)" evidence="10">
    <location>
        <position position="134"/>
    </location>
</feature>
<feature type="cross-link" description="Glycyl lysine isopeptide (Lys-Gly) (interchain with G-Cter in SUMO2)" evidence="10">
    <location>
        <position position="149"/>
    </location>
</feature>
<feature type="cross-link" description="Glycyl lysine isopeptide (Lys-Gly) (interchain with G-Cter in SUMO2)" evidence="10">
    <location>
        <position position="166"/>
    </location>
</feature>
<feature type="cross-link" description="Glycyl lysine isopeptide (Lys-Gly) (interchain with G-Cter in SUMO2)" evidence="10">
    <location>
        <position position="225"/>
    </location>
</feature>
<feature type="cross-link" description="Glycyl lysine isopeptide (Lys-Gly) (interchain with G-Cter in SUMO2)" evidence="10">
    <location>
        <position position="443"/>
    </location>
</feature>
<feature type="cross-link" description="Glycyl lysine isopeptide (Lys-Gly) (interchain with G-Cter in SUMO2)" evidence="9 10">
    <location>
        <position position="455"/>
    </location>
</feature>
<feature type="cross-link" description="Glycyl lysine isopeptide (Lys-Gly) (interchain with G-Cter in SUMO2)" evidence="10">
    <location>
        <position position="462"/>
    </location>
</feature>
<feature type="cross-link" description="Glycyl lysine isopeptide (Lys-Gly) (interchain with G-Cter in SUMO2)" evidence="10">
    <location>
        <position position="552"/>
    </location>
</feature>
<feature type="splice variant" id="VSP_034645" description="In isoform 5." evidence="8">
    <location>
        <begin position="1"/>
        <end position="176"/>
    </location>
</feature>
<feature type="splice variant" id="VSP_011442" description="In isoform 3." evidence="4 5">
    <original>TKTGVRPFNPGRMNVAGDLFQNGEFATHHSPDSWISQSASFPSNQKQPG</original>
    <variation>VNAGMGNSGITTELTLKYIITNVTTLETGISSVNAGQDVNIIITYKTSL</variation>
    <location>
        <begin position="165"/>
        <end position="213"/>
    </location>
</feature>
<feature type="splice variant" id="VSP_011443" description="In isoform 2." evidence="4 6 7">
    <original>DSWISQSASFPSN</original>
    <variation>EMHLQRRLMSFFQ</variation>
    <location>
        <begin position="196"/>
        <end position="208"/>
    </location>
</feature>
<feature type="splice variant" id="VSP_011444" description="In isoform 2." evidence="4 6 7">
    <location>
        <begin position="209"/>
        <end position="669"/>
    </location>
</feature>
<feature type="splice variant" id="VSP_011445" description="In isoform 3." evidence="4 5">
    <location>
        <begin position="214"/>
        <end position="669"/>
    </location>
</feature>
<feature type="splice variant" id="VSP_034646" description="In isoform 1." evidence="4">
    <original>IRHEVSVNNVTHKLCSNHCFNKYRLANGLIMNCCEH</original>
    <variation>VWIFIPKLLFRLTVIILTFKCYYVLFHLHNARVLDV</variation>
    <location>
        <begin position="347"/>
        <end position="382"/>
    </location>
</feature>
<feature type="splice variant" id="VSP_034647" description="In isoform 1." evidence="4">
    <location>
        <begin position="383"/>
        <end position="669"/>
    </location>
</feature>
<feature type="sequence variant" id="VAR_025508" description="In dbSNP:rs9579718." evidence="1 3">
    <original>I</original>
    <variation>V</variation>
    <location>
        <position position="125"/>
    </location>
</feature>
<feature type="sequence variant" id="VAR_025509" description="In dbSNP:rs9579717." evidence="1 3">
    <original>C</original>
    <variation>F</variation>
    <location>
        <position position="137"/>
    </location>
</feature>
<feature type="sequence variant" id="VAR_062160" description="In dbSNP:rs41292167.">
    <original>T</original>
    <variation>A</variation>
    <location>
        <position position="231"/>
    </location>
</feature>
<feature type="mutagenesis site" description="Abolishes interaction with ETV5. Abolished repression activity." evidence="2">
    <original>N</original>
    <variation>H</variation>
    <location>
        <position position="112"/>
    </location>
</feature>
<feature type="mutagenesis site" description="Abolishes interaction with ETV5. No effect on repression activity." evidence="2">
    <original>S</original>
    <variation>G</variation>
    <location>
        <position position="114"/>
    </location>
</feature>
<feature type="mutagenesis site" description="No effect on repression activity." evidence="2">
    <original>T</original>
    <variation>A</variation>
    <location>
        <position position="116"/>
    </location>
</feature>
<feature type="mutagenesis site" description="Increases repression activity." evidence="2">
    <original>D</original>
    <variation>G</variation>
    <location>
        <position position="120"/>
    </location>
</feature>
<feature type="sequence conflict" description="In Ref. 7; AAF29022." evidence="8" ref="7">
    <original>K</original>
    <variation>R</variation>
    <location>
        <position position="210"/>
    </location>
</feature>
<feature type="sequence conflict" description="In Ref. 7; AAF29022." evidence="8" ref="7">
    <original>V</original>
    <variation>M</variation>
    <location>
        <position position="214"/>
    </location>
</feature>
<feature type="sequence conflict" description="In Ref. 7; AAF29022." evidence="8" ref="7">
    <original>S</original>
    <variation>A</variation>
    <location>
        <position position="286"/>
    </location>
</feature>
<feature type="turn" evidence="11">
    <location>
        <begin position="245"/>
        <end position="247"/>
    </location>
</feature>
<feature type="strand" evidence="11">
    <location>
        <begin position="266"/>
        <end position="269"/>
    </location>
</feature>
<feature type="helix" evidence="11">
    <location>
        <begin position="270"/>
        <end position="276"/>
    </location>
</feature>
<proteinExistence type="evidence at protein level"/>
<dbReference type="EMBL" id="AJ133352">
    <property type="protein sequence ID" value="CAB57262.1"/>
    <property type="molecule type" value="mRNA"/>
</dbReference>
<dbReference type="EMBL" id="AJ133353">
    <property type="protein sequence ID" value="CAB57263.1"/>
    <property type="molecule type" value="mRNA"/>
</dbReference>
<dbReference type="EMBL" id="AJ133355">
    <property type="protein sequence ID" value="CAB57265.1"/>
    <property type="molecule type" value="mRNA"/>
</dbReference>
<dbReference type="EMBL" id="AJ133354">
    <property type="protein sequence ID" value="CAB57264.1"/>
    <property type="molecule type" value="mRNA"/>
</dbReference>
<dbReference type="EMBL" id="BT006687">
    <property type="protein sequence ID" value="AAP35333.1"/>
    <property type="molecule type" value="mRNA"/>
</dbReference>
<dbReference type="EMBL" id="AK312724">
    <property type="protein sequence ID" value="BAG35598.1"/>
    <property type="molecule type" value="mRNA"/>
</dbReference>
<dbReference type="EMBL" id="AL354808">
    <property type="status" value="NOT_ANNOTATED_CDS"/>
    <property type="molecule type" value="Genomic_DNA"/>
</dbReference>
<dbReference type="EMBL" id="AL355001">
    <property type="status" value="NOT_ANNOTATED_CDS"/>
    <property type="molecule type" value="Genomic_DNA"/>
</dbReference>
<dbReference type="EMBL" id="CH471075">
    <property type="protein sequence ID" value="EAX08238.1"/>
    <property type="molecule type" value="Genomic_DNA"/>
</dbReference>
<dbReference type="EMBL" id="CH471075">
    <property type="protein sequence ID" value="EAX08240.1"/>
    <property type="molecule type" value="Genomic_DNA"/>
</dbReference>
<dbReference type="EMBL" id="BC007048">
    <property type="protein sequence ID" value="AAH07048.1"/>
    <property type="molecule type" value="mRNA"/>
</dbReference>
<dbReference type="EMBL" id="AF161535">
    <property type="protein sequence ID" value="AAF29022.1"/>
    <property type="status" value="ALT_FRAME"/>
    <property type="molecule type" value="mRNA"/>
</dbReference>
<dbReference type="CCDS" id="CCDS31942.1">
    <molecule id="Q9UJ78-1"/>
</dbReference>
<dbReference type="CCDS" id="CCDS31943.1">
    <molecule id="Q9UJ78-2"/>
</dbReference>
<dbReference type="RefSeq" id="NP_001034738.1">
    <molecule id="Q9UJ78-2"/>
    <property type="nucleotide sequence ID" value="NM_001039649.3"/>
</dbReference>
<dbReference type="RefSeq" id="NP_001034739.1">
    <molecule id="Q9UJ78-1"/>
    <property type="nucleotide sequence ID" value="NM_001039650.3"/>
</dbReference>
<dbReference type="RefSeq" id="NP_001136156.1">
    <molecule id="Q9UJ78-4"/>
    <property type="nucleotide sequence ID" value="NM_001142684.2"/>
</dbReference>
<dbReference type="RefSeq" id="XP_005266650.1">
    <property type="nucleotide sequence ID" value="XM_005266593.3"/>
</dbReference>
<dbReference type="RefSeq" id="XP_005266651.1">
    <molecule id="Q9UJ78-4"/>
    <property type="nucleotide sequence ID" value="XM_005266594.4"/>
</dbReference>
<dbReference type="RefSeq" id="XP_006719957.1">
    <molecule id="Q9UJ78-4"/>
    <property type="nucleotide sequence ID" value="XM_006719894.4"/>
</dbReference>
<dbReference type="RefSeq" id="XP_047286726.1">
    <molecule id="Q9UJ78-2"/>
    <property type="nucleotide sequence ID" value="XM_047430770.1"/>
</dbReference>
<dbReference type="RefSeq" id="XP_047286727.1">
    <molecule id="Q9UJ78-2"/>
    <property type="nucleotide sequence ID" value="XM_047430771.1"/>
</dbReference>
<dbReference type="RefSeq" id="XP_054231149.1">
    <molecule id="Q9UJ78-4"/>
    <property type="nucleotide sequence ID" value="XM_054375174.1"/>
</dbReference>
<dbReference type="RefSeq" id="XP_054231150.1">
    <molecule id="Q9UJ78-4"/>
    <property type="nucleotide sequence ID" value="XM_054375175.1"/>
</dbReference>
<dbReference type="RefSeq" id="XP_054231157.1">
    <molecule id="Q9UJ78-2"/>
    <property type="nucleotide sequence ID" value="XM_054375182.1"/>
</dbReference>
<dbReference type="RefSeq" id="XP_054231158.1">
    <molecule id="Q9UJ78-2"/>
    <property type="nucleotide sequence ID" value="XM_054375183.1"/>
</dbReference>
<dbReference type="PDB" id="2DAS">
    <property type="method" value="NMR"/>
    <property type="chains" value="A=229-277"/>
</dbReference>
<dbReference type="PDBsum" id="2DAS"/>
<dbReference type="SMR" id="Q9UJ78"/>
<dbReference type="BioGRID" id="114639">
    <property type="interactions" value="37"/>
</dbReference>
<dbReference type="FunCoup" id="Q9UJ78">
    <property type="interactions" value="1328"/>
</dbReference>
<dbReference type="IntAct" id="Q9UJ78">
    <property type="interactions" value="32"/>
</dbReference>
<dbReference type="MINT" id="Q9UJ78"/>
<dbReference type="STRING" id="9606.ENSP00000372361"/>
<dbReference type="GlyGen" id="Q9UJ78">
    <property type="glycosylation" value="1 site, 1 O-linked glycan (1 site)"/>
</dbReference>
<dbReference type="iPTMnet" id="Q9UJ78"/>
<dbReference type="PhosphoSitePlus" id="Q9UJ78"/>
<dbReference type="BioMuta" id="ZMYM5"/>
<dbReference type="DMDM" id="212288108"/>
<dbReference type="jPOST" id="Q9UJ78"/>
<dbReference type="MassIVE" id="Q9UJ78"/>
<dbReference type="PaxDb" id="9606-ENSP00000372361"/>
<dbReference type="PeptideAtlas" id="Q9UJ78"/>
<dbReference type="ProteomicsDB" id="84596">
    <molecule id="Q9UJ78-4"/>
</dbReference>
<dbReference type="ProteomicsDB" id="84597">
    <molecule id="Q9UJ78-1"/>
</dbReference>
<dbReference type="ProteomicsDB" id="84598">
    <molecule id="Q9UJ78-2"/>
</dbReference>
<dbReference type="ProteomicsDB" id="84599">
    <molecule id="Q9UJ78-3"/>
</dbReference>
<dbReference type="ProteomicsDB" id="84600">
    <molecule id="Q9UJ78-5"/>
</dbReference>
<dbReference type="Antibodypedia" id="22270">
    <property type="antibodies" value="33 antibodies from 12 providers"/>
</dbReference>
<dbReference type="DNASU" id="9205"/>
<dbReference type="Ensembl" id="ENST00000337963.9">
    <molecule id="Q9UJ78-4"/>
    <property type="protein sequence ID" value="ENSP00000337034.4"/>
    <property type="gene ID" value="ENSG00000132950.19"/>
</dbReference>
<dbReference type="Ensembl" id="ENST00000382905.8">
    <molecule id="Q9UJ78-1"/>
    <property type="protein sequence ID" value="ENSP00000372361.4"/>
    <property type="gene ID" value="ENSG00000132950.19"/>
</dbReference>
<dbReference type="Ensembl" id="ENST00000382907.8">
    <molecule id="Q9UJ78-2"/>
    <property type="protein sequence ID" value="ENSP00000372364.4"/>
    <property type="gene ID" value="ENSG00000132950.19"/>
</dbReference>
<dbReference type="GeneID" id="9205"/>
<dbReference type="KEGG" id="hsa:9205"/>
<dbReference type="MANE-Select" id="ENST00000337963.9">
    <property type="protein sequence ID" value="ENSP00000337034.4"/>
    <property type="RefSeq nucleotide sequence ID" value="NM_001142684.2"/>
    <property type="RefSeq protein sequence ID" value="NP_001136156.1"/>
</dbReference>
<dbReference type="UCSC" id="uc001umn.4">
    <molecule id="Q9UJ78-4"/>
    <property type="organism name" value="human"/>
</dbReference>
<dbReference type="AGR" id="HGNC:13029"/>
<dbReference type="CTD" id="9205"/>
<dbReference type="DisGeNET" id="9205"/>
<dbReference type="GeneCards" id="ZMYM5"/>
<dbReference type="HGNC" id="HGNC:13029">
    <property type="gene designation" value="ZMYM5"/>
</dbReference>
<dbReference type="HPA" id="ENSG00000132950">
    <property type="expression patterns" value="Low tissue specificity"/>
</dbReference>
<dbReference type="MIM" id="616443">
    <property type="type" value="gene"/>
</dbReference>
<dbReference type="neXtProt" id="NX_Q9UJ78"/>
<dbReference type="OpenTargets" id="ENSG00000132950"/>
<dbReference type="PharmGKB" id="PA37607"/>
<dbReference type="VEuPathDB" id="HostDB:ENSG00000132950"/>
<dbReference type="eggNOG" id="ENOG502S9U9">
    <property type="taxonomic scope" value="Eukaryota"/>
</dbReference>
<dbReference type="GeneTree" id="ENSGT00940000162379"/>
<dbReference type="HOGENOM" id="CLU_026638_0_1_1"/>
<dbReference type="InParanoid" id="Q9UJ78"/>
<dbReference type="OMA" id="QSCVNEY"/>
<dbReference type="OrthoDB" id="10025028at2759"/>
<dbReference type="PAN-GO" id="Q9UJ78">
    <property type="GO annotations" value="0 GO annotations based on evolutionary models"/>
</dbReference>
<dbReference type="PhylomeDB" id="Q9UJ78"/>
<dbReference type="PathwayCommons" id="Q9UJ78"/>
<dbReference type="SignaLink" id="Q9UJ78"/>
<dbReference type="BioGRID-ORCS" id="9205">
    <property type="hits" value="10 hits in 1159 CRISPR screens"/>
</dbReference>
<dbReference type="ChiTaRS" id="ZMYM5">
    <property type="organism name" value="human"/>
</dbReference>
<dbReference type="EvolutionaryTrace" id="Q9UJ78"/>
<dbReference type="GenomeRNAi" id="9205"/>
<dbReference type="Pharos" id="Q9UJ78">
    <property type="development level" value="Tdark"/>
</dbReference>
<dbReference type="PRO" id="PR:Q9UJ78"/>
<dbReference type="Proteomes" id="UP000005640">
    <property type="component" value="Chromosome 13"/>
</dbReference>
<dbReference type="RNAct" id="Q9UJ78">
    <property type="molecule type" value="protein"/>
</dbReference>
<dbReference type="Bgee" id="ENSG00000132950">
    <property type="expression patterns" value="Expressed in buccal mucosa cell and 182 other cell types or tissues"/>
</dbReference>
<dbReference type="GO" id="GO:0005634">
    <property type="term" value="C:nucleus"/>
    <property type="evidence" value="ECO:0007669"/>
    <property type="project" value="UniProtKB-SubCell"/>
</dbReference>
<dbReference type="GO" id="GO:0008270">
    <property type="term" value="F:zinc ion binding"/>
    <property type="evidence" value="ECO:0007669"/>
    <property type="project" value="UniProtKB-KW"/>
</dbReference>
<dbReference type="GO" id="GO:0000122">
    <property type="term" value="P:negative regulation of transcription by RNA polymerase II"/>
    <property type="evidence" value="ECO:0000314"/>
    <property type="project" value="GO_Central"/>
</dbReference>
<dbReference type="InterPro" id="IPR011017">
    <property type="entry name" value="TRASH_dom"/>
</dbReference>
<dbReference type="InterPro" id="IPR010507">
    <property type="entry name" value="Znf_MYM"/>
</dbReference>
<dbReference type="InterPro" id="IPR051284">
    <property type="entry name" value="ZnF_MYMT-QRICH1"/>
</dbReference>
<dbReference type="PANTHER" id="PTHR45736">
    <property type="entry name" value="ZINC FINGER MYM-TYPE PROTEIN"/>
    <property type="match status" value="1"/>
</dbReference>
<dbReference type="PANTHER" id="PTHR45736:SF7">
    <property type="entry name" value="ZINC FINGER MYM-TYPE PROTEIN 5"/>
    <property type="match status" value="1"/>
</dbReference>
<dbReference type="Pfam" id="PF06467">
    <property type="entry name" value="zf-FCS"/>
    <property type="match status" value="3"/>
</dbReference>
<dbReference type="SMART" id="SM00746">
    <property type="entry name" value="TRASH"/>
    <property type="match status" value="3"/>
</dbReference>
<dbReference type="SUPFAM" id="SSF57716">
    <property type="entry name" value="Glucocorticoid receptor-like (DNA-binding domain)"/>
    <property type="match status" value="1"/>
</dbReference>
<accession>Q9UJ78</accession>
<accession>B2R6V1</accession>
<accession>Q5T6E1</accession>
<accession>Q5T6E2</accession>
<accession>Q5T6E4</accession>
<accession>Q96IY6</accession>
<accession>Q9NZY5</accession>
<accession>Q9UBW0</accession>
<accession>Q9UJ77</accession>
<evidence type="ECO:0000269" key="1">
    <source>
    </source>
</evidence>
<evidence type="ECO:0000269" key="2">
    <source>
    </source>
</evidence>
<evidence type="ECO:0000269" key="3">
    <source ref="2"/>
</evidence>
<evidence type="ECO:0000303" key="4">
    <source>
    </source>
</evidence>
<evidence type="ECO:0000303" key="5">
    <source>
    </source>
</evidence>
<evidence type="ECO:0000303" key="6">
    <source>
    </source>
</evidence>
<evidence type="ECO:0000303" key="7">
    <source ref="2"/>
</evidence>
<evidence type="ECO:0000305" key="8"/>
<evidence type="ECO:0007744" key="9">
    <source>
    </source>
</evidence>
<evidence type="ECO:0007744" key="10">
    <source>
    </source>
</evidence>
<evidence type="ECO:0007829" key="11">
    <source>
        <dbReference type="PDB" id="2DAS"/>
    </source>
</evidence>